<reference key="1">
    <citation type="journal article" date="1997" name="Nucleic Acids Res.">
        <title>Characterisation of Schizosaccharomyces pombe rad31, a UBA-related gene required for DNA damage tolerance.</title>
        <authorList>
            <person name="Shayeghi M."/>
            <person name="Doe C.L."/>
            <person name="Tavassoli M."/>
            <person name="Watts F.Z."/>
        </authorList>
    </citation>
    <scope>NUCLEOTIDE SEQUENCE [GENOMIC DNA]</scope>
    <source>
        <strain>972 / ATCC 24843</strain>
    </source>
</reference>
<reference key="2">
    <citation type="journal article" date="2002" name="Nature">
        <title>The genome sequence of Schizosaccharomyces pombe.</title>
        <authorList>
            <person name="Wood V."/>
            <person name="Gwilliam R."/>
            <person name="Rajandream M.A."/>
            <person name="Lyne M.H."/>
            <person name="Lyne R."/>
            <person name="Stewart A."/>
            <person name="Sgouros J.G."/>
            <person name="Peat N."/>
            <person name="Hayles J."/>
            <person name="Baker S.G."/>
            <person name="Basham D."/>
            <person name="Bowman S."/>
            <person name="Brooks K."/>
            <person name="Brown D."/>
            <person name="Brown S."/>
            <person name="Chillingworth T."/>
            <person name="Churcher C.M."/>
            <person name="Collins M."/>
            <person name="Connor R."/>
            <person name="Cronin A."/>
            <person name="Davis P."/>
            <person name="Feltwell T."/>
            <person name="Fraser A."/>
            <person name="Gentles S."/>
            <person name="Goble A."/>
            <person name="Hamlin N."/>
            <person name="Harris D.E."/>
            <person name="Hidalgo J."/>
            <person name="Hodgson G."/>
            <person name="Holroyd S."/>
            <person name="Hornsby T."/>
            <person name="Howarth S."/>
            <person name="Huckle E.J."/>
            <person name="Hunt S."/>
            <person name="Jagels K."/>
            <person name="James K.D."/>
            <person name="Jones L."/>
            <person name="Jones M."/>
            <person name="Leather S."/>
            <person name="McDonald S."/>
            <person name="McLean J."/>
            <person name="Mooney P."/>
            <person name="Moule S."/>
            <person name="Mungall K.L."/>
            <person name="Murphy L.D."/>
            <person name="Niblett D."/>
            <person name="Odell C."/>
            <person name="Oliver K."/>
            <person name="O'Neil S."/>
            <person name="Pearson D."/>
            <person name="Quail M.A."/>
            <person name="Rabbinowitsch E."/>
            <person name="Rutherford K.M."/>
            <person name="Rutter S."/>
            <person name="Saunders D."/>
            <person name="Seeger K."/>
            <person name="Sharp S."/>
            <person name="Skelton J."/>
            <person name="Simmonds M.N."/>
            <person name="Squares R."/>
            <person name="Squares S."/>
            <person name="Stevens K."/>
            <person name="Taylor K."/>
            <person name="Taylor R.G."/>
            <person name="Tivey A."/>
            <person name="Walsh S.V."/>
            <person name="Warren T."/>
            <person name="Whitehead S."/>
            <person name="Woodward J.R."/>
            <person name="Volckaert G."/>
            <person name="Aert R."/>
            <person name="Robben J."/>
            <person name="Grymonprez B."/>
            <person name="Weltjens I."/>
            <person name="Vanstreels E."/>
            <person name="Rieger M."/>
            <person name="Schaefer M."/>
            <person name="Mueller-Auer S."/>
            <person name="Gabel C."/>
            <person name="Fuchs M."/>
            <person name="Duesterhoeft A."/>
            <person name="Fritzc C."/>
            <person name="Holzer E."/>
            <person name="Moestl D."/>
            <person name="Hilbert H."/>
            <person name="Borzym K."/>
            <person name="Langer I."/>
            <person name="Beck A."/>
            <person name="Lehrach H."/>
            <person name="Reinhardt R."/>
            <person name="Pohl T.M."/>
            <person name="Eger P."/>
            <person name="Zimmermann W."/>
            <person name="Wedler H."/>
            <person name="Wambutt R."/>
            <person name="Purnelle B."/>
            <person name="Goffeau A."/>
            <person name="Cadieu E."/>
            <person name="Dreano S."/>
            <person name="Gloux S."/>
            <person name="Lelaure V."/>
            <person name="Mottier S."/>
            <person name="Galibert F."/>
            <person name="Aves S.J."/>
            <person name="Xiang Z."/>
            <person name="Hunt C."/>
            <person name="Moore K."/>
            <person name="Hurst S.M."/>
            <person name="Lucas M."/>
            <person name="Rochet M."/>
            <person name="Gaillardin C."/>
            <person name="Tallada V.A."/>
            <person name="Garzon A."/>
            <person name="Thode G."/>
            <person name="Daga R.R."/>
            <person name="Cruzado L."/>
            <person name="Jimenez J."/>
            <person name="Sanchez M."/>
            <person name="del Rey F."/>
            <person name="Benito J."/>
            <person name="Dominguez A."/>
            <person name="Revuelta J.L."/>
            <person name="Moreno S."/>
            <person name="Armstrong J."/>
            <person name="Forsburg S.L."/>
            <person name="Cerutti L."/>
            <person name="Lowe T."/>
            <person name="McCombie W.R."/>
            <person name="Paulsen I."/>
            <person name="Potashkin J."/>
            <person name="Shpakovski G.V."/>
            <person name="Ussery D."/>
            <person name="Barrell B.G."/>
            <person name="Nurse P."/>
        </authorList>
    </citation>
    <scope>NUCLEOTIDE SEQUENCE [LARGE SCALE GENOMIC DNA]</scope>
    <source>
        <strain>972 / ATCC 24843</strain>
    </source>
</reference>
<dbReference type="EMBL" id="Y08805">
    <property type="protein sequence ID" value="CAA70043.1"/>
    <property type="molecule type" value="Genomic_DNA"/>
</dbReference>
<dbReference type="EMBL" id="CU329670">
    <property type="protein sequence ID" value="CAB11175.1"/>
    <property type="molecule type" value="Genomic_DNA"/>
</dbReference>
<dbReference type="PIR" id="T45213">
    <property type="entry name" value="T45213"/>
</dbReference>
<dbReference type="RefSeq" id="NP_593251.1">
    <property type="nucleotide sequence ID" value="NM_001018648.2"/>
</dbReference>
<dbReference type="SMR" id="P79064"/>
<dbReference type="BioGRID" id="280021">
    <property type="interactions" value="11"/>
</dbReference>
<dbReference type="FunCoup" id="P79064">
    <property type="interactions" value="978"/>
</dbReference>
<dbReference type="IntAct" id="P79064">
    <property type="interactions" value="2"/>
</dbReference>
<dbReference type="STRING" id="284812.P79064"/>
<dbReference type="iPTMnet" id="P79064"/>
<dbReference type="PaxDb" id="4896-SPAC4C5.04.1"/>
<dbReference type="EnsemblFungi" id="SPAC4C5.04.1">
    <property type="protein sequence ID" value="SPAC4C5.04.1:pep"/>
    <property type="gene ID" value="SPAC4C5.04"/>
</dbReference>
<dbReference type="GeneID" id="2543606"/>
<dbReference type="KEGG" id="spo:2543606"/>
<dbReference type="PomBase" id="SPAC4C5.04">
    <property type="gene designation" value="rad31"/>
</dbReference>
<dbReference type="VEuPathDB" id="FungiDB:SPAC4C5.04"/>
<dbReference type="eggNOG" id="KOG2014">
    <property type="taxonomic scope" value="Eukaryota"/>
</dbReference>
<dbReference type="HOGENOM" id="CLU_002556_4_1_1"/>
<dbReference type="InParanoid" id="P79064"/>
<dbReference type="OMA" id="YAFFDFT"/>
<dbReference type="PhylomeDB" id="P79064"/>
<dbReference type="Reactome" id="R-SPO-3065676">
    <property type="pathway name" value="SUMO is conjugated to E1 (UBA2:SAE1)"/>
</dbReference>
<dbReference type="Reactome" id="R-SPO-3065678">
    <property type="pathway name" value="SUMO is transferred from E1 to E2 (UBE2I, UBC9)"/>
</dbReference>
<dbReference type="PRO" id="PR:P79064"/>
<dbReference type="Proteomes" id="UP000002485">
    <property type="component" value="Chromosome I"/>
</dbReference>
<dbReference type="GO" id="GO:0005737">
    <property type="term" value="C:cytoplasm"/>
    <property type="evidence" value="ECO:0000318"/>
    <property type="project" value="GO_Central"/>
</dbReference>
<dbReference type="GO" id="GO:0005829">
    <property type="term" value="C:cytosol"/>
    <property type="evidence" value="ECO:0007005"/>
    <property type="project" value="PomBase"/>
</dbReference>
<dbReference type="GO" id="GO:0005634">
    <property type="term" value="C:nucleus"/>
    <property type="evidence" value="ECO:0007005"/>
    <property type="project" value="PomBase"/>
</dbReference>
<dbReference type="GO" id="GO:0031510">
    <property type="term" value="C:SUMO activating enzyme complex"/>
    <property type="evidence" value="ECO:0000318"/>
    <property type="project" value="GO_Central"/>
</dbReference>
<dbReference type="GO" id="GO:0016887">
    <property type="term" value="F:ATP hydrolysis activity"/>
    <property type="evidence" value="ECO:0000305"/>
    <property type="project" value="PomBase"/>
</dbReference>
<dbReference type="GO" id="GO:0019948">
    <property type="term" value="F:SUMO activating enzyme activity"/>
    <property type="evidence" value="ECO:0000314"/>
    <property type="project" value="PomBase"/>
</dbReference>
<dbReference type="GO" id="GO:0006974">
    <property type="term" value="P:DNA damage response"/>
    <property type="evidence" value="ECO:0007669"/>
    <property type="project" value="UniProtKB-KW"/>
</dbReference>
<dbReference type="GO" id="GO:0007076">
    <property type="term" value="P:mitotic chromosome condensation"/>
    <property type="evidence" value="ECO:0000316"/>
    <property type="project" value="PomBase"/>
</dbReference>
<dbReference type="GO" id="GO:0016925">
    <property type="term" value="P:protein sumoylation"/>
    <property type="evidence" value="ECO:0000269"/>
    <property type="project" value="PomBase"/>
</dbReference>
<dbReference type="CDD" id="cd01492">
    <property type="entry name" value="Aos1_SUMO"/>
    <property type="match status" value="1"/>
</dbReference>
<dbReference type="Gene3D" id="3.40.50.720">
    <property type="entry name" value="NAD(P)-binding Rossmann-like Domain"/>
    <property type="match status" value="1"/>
</dbReference>
<dbReference type="InterPro" id="IPR045886">
    <property type="entry name" value="ThiF/MoeB/HesA"/>
</dbReference>
<dbReference type="InterPro" id="IPR000594">
    <property type="entry name" value="ThiF_NAD_FAD-bd"/>
</dbReference>
<dbReference type="InterPro" id="IPR035985">
    <property type="entry name" value="Ubiquitin-activating_enz"/>
</dbReference>
<dbReference type="PANTHER" id="PTHR10953:SF162">
    <property type="entry name" value="SUMO-ACTIVATING ENZYME SUBUNIT 1"/>
    <property type="match status" value="1"/>
</dbReference>
<dbReference type="PANTHER" id="PTHR10953">
    <property type="entry name" value="UBIQUITIN-ACTIVATING ENZYME E1"/>
    <property type="match status" value="1"/>
</dbReference>
<dbReference type="Pfam" id="PF00899">
    <property type="entry name" value="ThiF"/>
    <property type="match status" value="1"/>
</dbReference>
<dbReference type="SUPFAM" id="SSF69572">
    <property type="entry name" value="Activating enzymes of the ubiquitin-like proteins"/>
    <property type="match status" value="1"/>
</dbReference>
<keyword id="KW-0227">DNA damage</keyword>
<keyword id="KW-1185">Reference proteome</keyword>
<proteinExistence type="predicted"/>
<name>RAD31_SCHPO</name>
<feature type="chain" id="PRO_0000194974" description="DNA damage tolerance protein rad31">
    <location>
        <begin position="1"/>
        <end position="307"/>
    </location>
</feature>
<protein>
    <recommendedName>
        <fullName>DNA damage tolerance protein rad31</fullName>
    </recommendedName>
</protein>
<accession>P79064</accession>
<organism>
    <name type="scientific">Schizosaccharomyces pombe (strain 972 / ATCC 24843)</name>
    <name type="common">Fission yeast</name>
    <dbReference type="NCBI Taxonomy" id="284812"/>
    <lineage>
        <taxon>Eukaryota</taxon>
        <taxon>Fungi</taxon>
        <taxon>Dikarya</taxon>
        <taxon>Ascomycota</taxon>
        <taxon>Taphrinomycotina</taxon>
        <taxon>Schizosaccharomycetes</taxon>
        <taxon>Schizosaccharomycetales</taxon>
        <taxon>Schizosaccharomycetaceae</taxon>
        <taxon>Schizosaccharomyces</taxon>
    </lineage>
</organism>
<gene>
    <name type="primary">rad31</name>
    <name type="ORF">SPAC4C5.04</name>
</gene>
<sequence>MGNHNINAEEIALYDRQIRLWGFNAQQALKQSRVLLITASPLANEIAKNLVLSGIGKLCVLDSMTVYEKDVEEQFFIEASDIGQLRANVFKKKLHELNPLVEIDTDTSLISEIDEGKISKFSMVIATQLDYEEFCRINELTRICNASFYATSCFGLYGFAFCDLINHNFAIDRVVDNTKVEEDMFIVQKPMKEAFQSILGETLKPRLAKKIPTLYPAMLSLLKSKKSDPDSIRQVCIEQKLNEKTVLNGEFLSKFSSNISFQWTPVMSVVGGVVSQDALNSISKKQFPIDNFWIFDAESGLAPIYRL</sequence>
<comment type="function">
    <text>Could be involved in a ubiquitin-related process important for DNA damage tolerance. Acts in a process which is defective in the checkpoint rad mutants and which involves hus5.</text>
</comment>